<sequence>MLECENLSCTRNNKVLFKNLSFKAELKSKILITGPNGSGKTSLIRSLSGLLPPVSGNIRHCGKDIYDDPKSYISSMVYIGHKNACKDSLTVAQNVEFWAGIRNTRELIVAAICCLQLQPVLNIRYGELSAGWKRRVALARLLISNANVWLIDEPFCNLDSATCELVLNLISIRSEQNGIVIITGHSSTEQLCDFTTIDIRNFNRLLV</sequence>
<dbReference type="EC" id="7.6.2.5" evidence="1"/>
<dbReference type="EMBL" id="AE017196">
    <property type="protein sequence ID" value="AAS14135.1"/>
    <property type="molecule type" value="Genomic_DNA"/>
</dbReference>
<dbReference type="RefSeq" id="WP_007548816.1">
    <property type="nucleotide sequence ID" value="NZ_OX384529.1"/>
</dbReference>
<dbReference type="SMR" id="Q73HX8"/>
<dbReference type="EnsemblBacteria" id="AAS14135">
    <property type="protein sequence ID" value="AAS14135"/>
    <property type="gene ID" value="WD_0411"/>
</dbReference>
<dbReference type="GeneID" id="70035903"/>
<dbReference type="KEGG" id="wol:WD_0411"/>
<dbReference type="eggNOG" id="COG4133">
    <property type="taxonomic scope" value="Bacteria"/>
</dbReference>
<dbReference type="Proteomes" id="UP000008215">
    <property type="component" value="Chromosome"/>
</dbReference>
<dbReference type="GO" id="GO:0005886">
    <property type="term" value="C:plasma membrane"/>
    <property type="evidence" value="ECO:0007669"/>
    <property type="project" value="UniProtKB-SubCell"/>
</dbReference>
<dbReference type="GO" id="GO:0015439">
    <property type="term" value="F:ABC-type heme transporter activity"/>
    <property type="evidence" value="ECO:0007669"/>
    <property type="project" value="UniProtKB-EC"/>
</dbReference>
<dbReference type="GO" id="GO:0005524">
    <property type="term" value="F:ATP binding"/>
    <property type="evidence" value="ECO:0007669"/>
    <property type="project" value="UniProtKB-KW"/>
</dbReference>
<dbReference type="GO" id="GO:0016887">
    <property type="term" value="F:ATP hydrolysis activity"/>
    <property type="evidence" value="ECO:0007669"/>
    <property type="project" value="InterPro"/>
</dbReference>
<dbReference type="GO" id="GO:0017004">
    <property type="term" value="P:cytochrome complex assembly"/>
    <property type="evidence" value="ECO:0007669"/>
    <property type="project" value="UniProtKB-KW"/>
</dbReference>
<dbReference type="Gene3D" id="3.40.50.300">
    <property type="entry name" value="P-loop containing nucleotide triphosphate hydrolases"/>
    <property type="match status" value="1"/>
</dbReference>
<dbReference type="InterPro" id="IPR003593">
    <property type="entry name" value="AAA+_ATPase"/>
</dbReference>
<dbReference type="InterPro" id="IPR003439">
    <property type="entry name" value="ABC_transporter-like_ATP-bd"/>
</dbReference>
<dbReference type="InterPro" id="IPR017871">
    <property type="entry name" value="ABC_transporter-like_CS"/>
</dbReference>
<dbReference type="InterPro" id="IPR005895">
    <property type="entry name" value="ABC_transptr_haem_export_CcmA"/>
</dbReference>
<dbReference type="InterPro" id="IPR027417">
    <property type="entry name" value="P-loop_NTPase"/>
</dbReference>
<dbReference type="NCBIfam" id="TIGR01189">
    <property type="entry name" value="ccmA"/>
    <property type="match status" value="1"/>
</dbReference>
<dbReference type="PANTHER" id="PTHR43499">
    <property type="entry name" value="ABC TRANSPORTER I FAMILY MEMBER 1"/>
    <property type="match status" value="1"/>
</dbReference>
<dbReference type="PANTHER" id="PTHR43499:SF1">
    <property type="entry name" value="ABC TRANSPORTER I FAMILY MEMBER 1"/>
    <property type="match status" value="1"/>
</dbReference>
<dbReference type="Pfam" id="PF00005">
    <property type="entry name" value="ABC_tran"/>
    <property type="match status" value="1"/>
</dbReference>
<dbReference type="SMART" id="SM00382">
    <property type="entry name" value="AAA"/>
    <property type="match status" value="1"/>
</dbReference>
<dbReference type="SUPFAM" id="SSF52540">
    <property type="entry name" value="P-loop containing nucleoside triphosphate hydrolases"/>
    <property type="match status" value="1"/>
</dbReference>
<dbReference type="PROSITE" id="PS00211">
    <property type="entry name" value="ABC_TRANSPORTER_1"/>
    <property type="match status" value="1"/>
</dbReference>
<dbReference type="PROSITE" id="PS50893">
    <property type="entry name" value="ABC_TRANSPORTER_2"/>
    <property type="match status" value="1"/>
</dbReference>
<dbReference type="PROSITE" id="PS51243">
    <property type="entry name" value="CCMA"/>
    <property type="match status" value="1"/>
</dbReference>
<organism>
    <name type="scientific">Wolbachia pipientis wMel</name>
    <dbReference type="NCBI Taxonomy" id="163164"/>
    <lineage>
        <taxon>Bacteria</taxon>
        <taxon>Pseudomonadati</taxon>
        <taxon>Pseudomonadota</taxon>
        <taxon>Alphaproteobacteria</taxon>
        <taxon>Rickettsiales</taxon>
        <taxon>Anaplasmataceae</taxon>
        <taxon>Wolbachieae</taxon>
        <taxon>Wolbachia</taxon>
    </lineage>
</organism>
<reference key="1">
    <citation type="journal article" date="2004" name="PLoS Biol.">
        <title>Phylogenomics of the reproductive parasite Wolbachia pipientis wMel: a streamlined genome overrun by mobile genetic elements.</title>
        <authorList>
            <person name="Wu M."/>
            <person name="Sun L.V."/>
            <person name="Vamathevan J.J."/>
            <person name="Riegler M."/>
            <person name="DeBoy R.T."/>
            <person name="Brownlie J.C."/>
            <person name="McGraw E.A."/>
            <person name="Martin W."/>
            <person name="Esser C."/>
            <person name="Ahmadinejad N."/>
            <person name="Wiegand C."/>
            <person name="Madupu R."/>
            <person name="Beanan M.J."/>
            <person name="Brinkac L.M."/>
            <person name="Daugherty S.C."/>
            <person name="Durkin A.S."/>
            <person name="Kolonay J.F."/>
            <person name="Nelson W.C."/>
            <person name="Mohamoud Y."/>
            <person name="Lee P."/>
            <person name="Berry K.J."/>
            <person name="Young M.B."/>
            <person name="Utterback T.R."/>
            <person name="Weidman J.F."/>
            <person name="Nierman W.C."/>
            <person name="Paulsen I.T."/>
            <person name="Nelson K.E."/>
            <person name="Tettelin H."/>
            <person name="O'Neill S.L."/>
            <person name="Eisen J.A."/>
        </authorList>
    </citation>
    <scope>NUCLEOTIDE SEQUENCE [LARGE SCALE GENOMIC DNA]</scope>
</reference>
<accession>Q73HX8</accession>
<name>CCMA_WOLPM</name>
<keyword id="KW-0067">ATP-binding</keyword>
<keyword id="KW-1003">Cell membrane</keyword>
<keyword id="KW-0201">Cytochrome c-type biogenesis</keyword>
<keyword id="KW-0472">Membrane</keyword>
<keyword id="KW-0547">Nucleotide-binding</keyword>
<keyword id="KW-1278">Translocase</keyword>
<keyword id="KW-0813">Transport</keyword>
<comment type="function">
    <text evidence="1">Part of the ABC transporter complex CcmAB involved in the biogenesis of c-type cytochromes; once thought to export heme, this seems not to be the case, but its exact role is uncertain. Responsible for energy coupling to the transport system.</text>
</comment>
<comment type="catalytic activity">
    <reaction evidence="1">
        <text>heme b(in) + ATP + H2O = heme b(out) + ADP + phosphate + H(+)</text>
        <dbReference type="Rhea" id="RHEA:19261"/>
        <dbReference type="ChEBI" id="CHEBI:15377"/>
        <dbReference type="ChEBI" id="CHEBI:15378"/>
        <dbReference type="ChEBI" id="CHEBI:30616"/>
        <dbReference type="ChEBI" id="CHEBI:43474"/>
        <dbReference type="ChEBI" id="CHEBI:60344"/>
        <dbReference type="ChEBI" id="CHEBI:456216"/>
        <dbReference type="EC" id="7.6.2.5"/>
    </reaction>
</comment>
<comment type="subunit">
    <text evidence="1">The complex is composed of two ATP-binding proteins (CcmA) and two transmembrane proteins (CcmB).</text>
</comment>
<comment type="subcellular location">
    <subcellularLocation>
        <location evidence="1">Cell membrane</location>
        <topology evidence="1">Peripheral membrane protein</topology>
    </subcellularLocation>
</comment>
<comment type="similarity">
    <text evidence="1">Belongs to the ABC transporter superfamily. CcmA exporter (TC 3.A.1.107) family.</text>
</comment>
<gene>
    <name evidence="1" type="primary">ccmA</name>
    <name type="ordered locus">WD_0411</name>
</gene>
<protein>
    <recommendedName>
        <fullName evidence="1">Cytochrome c biogenesis ATP-binding export protein CcmA</fullName>
        <ecNumber evidence="1">7.6.2.5</ecNumber>
    </recommendedName>
    <alternativeName>
        <fullName evidence="1">Heme exporter protein A</fullName>
    </alternativeName>
</protein>
<evidence type="ECO:0000255" key="1">
    <source>
        <dbReference type="HAMAP-Rule" id="MF_01707"/>
    </source>
</evidence>
<feature type="chain" id="PRO_0000092221" description="Cytochrome c biogenesis ATP-binding export protein CcmA">
    <location>
        <begin position="1"/>
        <end position="207"/>
    </location>
</feature>
<feature type="domain" description="ABC transporter" evidence="1">
    <location>
        <begin position="2"/>
        <end position="204"/>
    </location>
</feature>
<feature type="binding site" evidence="1">
    <location>
        <begin position="34"/>
        <end position="41"/>
    </location>
    <ligand>
        <name>ATP</name>
        <dbReference type="ChEBI" id="CHEBI:30616"/>
    </ligand>
</feature>
<proteinExistence type="inferred from homology"/>